<feature type="chain" id="PRO_0000116610" description="Uncharacterized protein C12B10.02c">
    <location>
        <begin position="1"/>
        <end position="235"/>
    </location>
</feature>
<feature type="transmembrane region" description="Helical" evidence="1">
    <location>
        <begin position="41"/>
        <end position="61"/>
    </location>
</feature>
<feature type="transmembrane region" description="Helical" evidence="1">
    <location>
        <begin position="71"/>
        <end position="91"/>
    </location>
</feature>
<feature type="transmembrane region" description="Helical" evidence="1">
    <location>
        <begin position="129"/>
        <end position="149"/>
    </location>
</feature>
<organism>
    <name type="scientific">Schizosaccharomyces pombe (strain 972 / ATCC 24843)</name>
    <name type="common">Fission yeast</name>
    <dbReference type="NCBI Taxonomy" id="284812"/>
    <lineage>
        <taxon>Eukaryota</taxon>
        <taxon>Fungi</taxon>
        <taxon>Dikarya</taxon>
        <taxon>Ascomycota</taxon>
        <taxon>Taphrinomycotina</taxon>
        <taxon>Schizosaccharomycetes</taxon>
        <taxon>Schizosaccharomycetales</taxon>
        <taxon>Schizosaccharomycetaceae</taxon>
        <taxon>Schizosaccharomyces</taxon>
    </lineage>
</organism>
<protein>
    <recommendedName>
        <fullName>Uncharacterized protein C12B10.02c</fullName>
    </recommendedName>
</protein>
<sequence length="235" mass="26934">MSNVQRKRIDIRRPTLAELSSIRSIAMNALNGQSRNLSQKIFWHPLYLAVFGLVFMGIYRLTNMVEGNTKLRTFVLLILVSAVFLTLIEFPCRNVYAKISTEDNQPDGCLAEENLKHFYMARIDKERVIGIIGILPANAPGAYQNTPTIVHWTVIPKFYQYAFDLLDSALREAKEMGADVVSARVYSTDPMLKAFERKDFTPVVDEAFDYLSFFGLRRLVLQKNLSEQPGFENRR</sequence>
<keyword id="KW-0472">Membrane</keyword>
<keyword id="KW-1185">Reference proteome</keyword>
<keyword id="KW-0812">Transmembrane</keyword>
<keyword id="KW-1133">Transmembrane helix</keyword>
<name>YDE2_SCHPO</name>
<comment type="subcellular location">
    <subcellularLocation>
        <location evidence="2">Membrane</location>
        <topology evidence="2">Multi-pass membrane protein</topology>
    </subcellularLocation>
</comment>
<accession>Q10436</accession>
<proteinExistence type="predicted"/>
<evidence type="ECO:0000255" key="1"/>
<evidence type="ECO:0000305" key="2"/>
<reference key="1">
    <citation type="journal article" date="2002" name="Nature">
        <title>The genome sequence of Schizosaccharomyces pombe.</title>
        <authorList>
            <person name="Wood V."/>
            <person name="Gwilliam R."/>
            <person name="Rajandream M.A."/>
            <person name="Lyne M.H."/>
            <person name="Lyne R."/>
            <person name="Stewart A."/>
            <person name="Sgouros J.G."/>
            <person name="Peat N."/>
            <person name="Hayles J."/>
            <person name="Baker S.G."/>
            <person name="Basham D."/>
            <person name="Bowman S."/>
            <person name="Brooks K."/>
            <person name="Brown D."/>
            <person name="Brown S."/>
            <person name="Chillingworth T."/>
            <person name="Churcher C.M."/>
            <person name="Collins M."/>
            <person name="Connor R."/>
            <person name="Cronin A."/>
            <person name="Davis P."/>
            <person name="Feltwell T."/>
            <person name="Fraser A."/>
            <person name="Gentles S."/>
            <person name="Goble A."/>
            <person name="Hamlin N."/>
            <person name="Harris D.E."/>
            <person name="Hidalgo J."/>
            <person name="Hodgson G."/>
            <person name="Holroyd S."/>
            <person name="Hornsby T."/>
            <person name="Howarth S."/>
            <person name="Huckle E.J."/>
            <person name="Hunt S."/>
            <person name="Jagels K."/>
            <person name="James K.D."/>
            <person name="Jones L."/>
            <person name="Jones M."/>
            <person name="Leather S."/>
            <person name="McDonald S."/>
            <person name="McLean J."/>
            <person name="Mooney P."/>
            <person name="Moule S."/>
            <person name="Mungall K.L."/>
            <person name="Murphy L.D."/>
            <person name="Niblett D."/>
            <person name="Odell C."/>
            <person name="Oliver K."/>
            <person name="O'Neil S."/>
            <person name="Pearson D."/>
            <person name="Quail M.A."/>
            <person name="Rabbinowitsch E."/>
            <person name="Rutherford K.M."/>
            <person name="Rutter S."/>
            <person name="Saunders D."/>
            <person name="Seeger K."/>
            <person name="Sharp S."/>
            <person name="Skelton J."/>
            <person name="Simmonds M.N."/>
            <person name="Squares R."/>
            <person name="Squares S."/>
            <person name="Stevens K."/>
            <person name="Taylor K."/>
            <person name="Taylor R.G."/>
            <person name="Tivey A."/>
            <person name="Walsh S.V."/>
            <person name="Warren T."/>
            <person name="Whitehead S."/>
            <person name="Woodward J.R."/>
            <person name="Volckaert G."/>
            <person name="Aert R."/>
            <person name="Robben J."/>
            <person name="Grymonprez B."/>
            <person name="Weltjens I."/>
            <person name="Vanstreels E."/>
            <person name="Rieger M."/>
            <person name="Schaefer M."/>
            <person name="Mueller-Auer S."/>
            <person name="Gabel C."/>
            <person name="Fuchs M."/>
            <person name="Duesterhoeft A."/>
            <person name="Fritzc C."/>
            <person name="Holzer E."/>
            <person name="Moestl D."/>
            <person name="Hilbert H."/>
            <person name="Borzym K."/>
            <person name="Langer I."/>
            <person name="Beck A."/>
            <person name="Lehrach H."/>
            <person name="Reinhardt R."/>
            <person name="Pohl T.M."/>
            <person name="Eger P."/>
            <person name="Zimmermann W."/>
            <person name="Wedler H."/>
            <person name="Wambutt R."/>
            <person name="Purnelle B."/>
            <person name="Goffeau A."/>
            <person name="Cadieu E."/>
            <person name="Dreano S."/>
            <person name="Gloux S."/>
            <person name="Lelaure V."/>
            <person name="Mottier S."/>
            <person name="Galibert F."/>
            <person name="Aves S.J."/>
            <person name="Xiang Z."/>
            <person name="Hunt C."/>
            <person name="Moore K."/>
            <person name="Hurst S.M."/>
            <person name="Lucas M."/>
            <person name="Rochet M."/>
            <person name="Gaillardin C."/>
            <person name="Tallada V.A."/>
            <person name="Garzon A."/>
            <person name="Thode G."/>
            <person name="Daga R.R."/>
            <person name="Cruzado L."/>
            <person name="Jimenez J."/>
            <person name="Sanchez M."/>
            <person name="del Rey F."/>
            <person name="Benito J."/>
            <person name="Dominguez A."/>
            <person name="Revuelta J.L."/>
            <person name="Moreno S."/>
            <person name="Armstrong J."/>
            <person name="Forsburg S.L."/>
            <person name="Cerutti L."/>
            <person name="Lowe T."/>
            <person name="McCombie W.R."/>
            <person name="Paulsen I."/>
            <person name="Potashkin J."/>
            <person name="Shpakovski G.V."/>
            <person name="Ussery D."/>
            <person name="Barrell B.G."/>
            <person name="Nurse P."/>
        </authorList>
    </citation>
    <scope>NUCLEOTIDE SEQUENCE [LARGE SCALE GENOMIC DNA]</scope>
    <source>
        <strain>972 / ATCC 24843</strain>
    </source>
</reference>
<dbReference type="EMBL" id="CU329670">
    <property type="protein sequence ID" value="CAA94692.1"/>
    <property type="molecule type" value="Genomic_DNA"/>
</dbReference>
<dbReference type="PIR" id="T37569">
    <property type="entry name" value="T37569"/>
</dbReference>
<dbReference type="SMR" id="Q10436"/>
<dbReference type="BioGRID" id="279442">
    <property type="interactions" value="5"/>
</dbReference>
<dbReference type="IntAct" id="Q10436">
    <property type="interactions" value="1"/>
</dbReference>
<dbReference type="iPTMnet" id="Q10436"/>
<dbReference type="PaxDb" id="4896-SPAC12B10.02c.1"/>
<dbReference type="EnsemblFungi" id="SPAC12B10.02c.1">
    <property type="protein sequence ID" value="SPAC12B10.02c.1:pep"/>
    <property type="gene ID" value="SPAC12B10.02c"/>
</dbReference>
<dbReference type="KEGG" id="spo:2543004"/>
<dbReference type="PomBase" id="SPAC12B10.02c"/>
<dbReference type="VEuPathDB" id="FungiDB:SPAC12B10.02c"/>
<dbReference type="HOGENOM" id="CLU_1180807_0_0_1"/>
<dbReference type="InParanoid" id="Q10436"/>
<dbReference type="OMA" id="PTIVHWN"/>
<dbReference type="PRO" id="PR:Q10436"/>
<dbReference type="Proteomes" id="UP000002485">
    <property type="component" value="Chromosome I"/>
</dbReference>
<dbReference type="GO" id="GO:0005783">
    <property type="term" value="C:endoplasmic reticulum"/>
    <property type="evidence" value="ECO:0007005"/>
    <property type="project" value="PomBase"/>
</dbReference>
<dbReference type="GO" id="GO:0005789">
    <property type="term" value="C:endoplasmic reticulum membrane"/>
    <property type="evidence" value="ECO:0000303"/>
    <property type="project" value="PomBase"/>
</dbReference>
<dbReference type="GO" id="GO:0047198">
    <property type="term" value="F:L-cysteine-S-conjugate N-acetyltransferase activity"/>
    <property type="evidence" value="ECO:0000266"/>
    <property type="project" value="PomBase"/>
</dbReference>
<dbReference type="GO" id="GO:0006888">
    <property type="term" value="P:endoplasmic reticulum to Golgi vesicle-mediated transport"/>
    <property type="evidence" value="ECO:0000266"/>
    <property type="project" value="PomBase"/>
</dbReference>
<dbReference type="InterPro" id="IPR016181">
    <property type="entry name" value="Acyl_CoA_acyltransferase"/>
</dbReference>
<dbReference type="InterPro" id="IPR024297">
    <property type="entry name" value="Pho86"/>
</dbReference>
<dbReference type="Pfam" id="PF11124">
    <property type="entry name" value="Pho86"/>
    <property type="match status" value="1"/>
</dbReference>
<dbReference type="SUPFAM" id="SSF55729">
    <property type="entry name" value="Acyl-CoA N-acyltransferases (Nat)"/>
    <property type="match status" value="1"/>
</dbReference>
<gene>
    <name type="ORF">SPAC12B10.02c</name>
</gene>